<proteinExistence type="inferred from homology"/>
<keyword id="KW-0249">Electron transport</keyword>
<keyword id="KW-0349">Heme</keyword>
<keyword id="KW-0408">Iron</keyword>
<keyword id="KW-0472">Membrane</keyword>
<keyword id="KW-0479">Metal-binding</keyword>
<keyword id="KW-0496">Mitochondrion</keyword>
<keyword id="KW-0999">Mitochondrion inner membrane</keyword>
<keyword id="KW-0679">Respiratory chain</keyword>
<keyword id="KW-0812">Transmembrane</keyword>
<keyword id="KW-1133">Transmembrane helix</keyword>
<keyword id="KW-0813">Transport</keyword>
<keyword id="KW-0830">Ubiquinone</keyword>
<comment type="function">
    <text evidence="2">Component of the ubiquinol-cytochrome c reductase complex (complex III or cytochrome b-c1 complex) that is part of the mitochondrial respiratory chain. The b-c1 complex mediates electron transfer from ubiquinol to cytochrome c. Contributes to the generation of a proton gradient across the mitochondrial membrane that is then used for ATP synthesis.</text>
</comment>
<comment type="cofactor">
    <cofactor evidence="2">
        <name>heme b</name>
        <dbReference type="ChEBI" id="CHEBI:60344"/>
    </cofactor>
    <text evidence="2">Binds 2 heme b groups non-covalently.</text>
</comment>
<comment type="subunit">
    <text evidence="2">The cytochrome bc1 complex contains 11 subunits: 3 respiratory subunits (MT-CYB, CYC1 and UQCRFS1), 2 core proteins (UQCRC1 and UQCRC2) and 6 low-molecular weight proteins (UQCRH/QCR6, UQCRB/QCR7, UQCRQ/QCR8, UQCR10/QCR9, UQCR11/QCR10 and a cleavage product of UQCRFS1). This cytochrome bc1 complex then forms a dimer.</text>
</comment>
<comment type="subcellular location">
    <subcellularLocation>
        <location evidence="2">Mitochondrion inner membrane</location>
        <topology evidence="2">Multi-pass membrane protein</topology>
    </subcellularLocation>
</comment>
<comment type="miscellaneous">
    <text evidence="1">Heme 1 (or BL or b562) is low-potential and absorbs at about 562 nm, and heme 2 (or BH or b566) is high-potential and absorbs at about 566 nm.</text>
</comment>
<comment type="similarity">
    <text evidence="3 4">Belongs to the cytochrome b family.</text>
</comment>
<comment type="caution">
    <text evidence="2">The full-length protein contains only eight transmembrane helices, not nine as predicted by bioinformatics tools.</text>
</comment>
<geneLocation type="mitochondrion"/>
<reference key="1">
    <citation type="submission" date="2004-05" db="EMBL/GenBank/DDBJ databases">
        <title>Phylogeny of Brachyphylla.</title>
        <authorList>
            <person name="Davalos L.M."/>
        </authorList>
    </citation>
    <scope>NUCLEOTIDE SEQUENCE [GENOMIC DNA]</scope>
</reference>
<organism>
    <name type="scientific">Erophylla bombifrons</name>
    <name type="common">Eastern buffy flower bat</name>
    <dbReference type="NCBI Taxonomy" id="290569"/>
    <lineage>
        <taxon>Eukaryota</taxon>
        <taxon>Metazoa</taxon>
        <taxon>Chordata</taxon>
        <taxon>Craniata</taxon>
        <taxon>Vertebrata</taxon>
        <taxon>Euteleostomi</taxon>
        <taxon>Mammalia</taxon>
        <taxon>Eutheria</taxon>
        <taxon>Laurasiatheria</taxon>
        <taxon>Chiroptera</taxon>
        <taxon>Yangochiroptera</taxon>
        <taxon>Phyllostomidae</taxon>
        <taxon>Phyllonycterinae</taxon>
        <taxon>Erophylla</taxon>
    </lineage>
</organism>
<dbReference type="EMBL" id="AY620438">
    <property type="protein sequence ID" value="AAU04697.1"/>
    <property type="molecule type" value="Genomic_DNA"/>
</dbReference>
<dbReference type="SMR" id="Q4VUY9"/>
<dbReference type="GO" id="GO:0005743">
    <property type="term" value="C:mitochondrial inner membrane"/>
    <property type="evidence" value="ECO:0007669"/>
    <property type="project" value="UniProtKB-SubCell"/>
</dbReference>
<dbReference type="GO" id="GO:0045275">
    <property type="term" value="C:respiratory chain complex III"/>
    <property type="evidence" value="ECO:0007669"/>
    <property type="project" value="InterPro"/>
</dbReference>
<dbReference type="GO" id="GO:0046872">
    <property type="term" value="F:metal ion binding"/>
    <property type="evidence" value="ECO:0007669"/>
    <property type="project" value="UniProtKB-KW"/>
</dbReference>
<dbReference type="GO" id="GO:0008121">
    <property type="term" value="F:ubiquinol-cytochrome-c reductase activity"/>
    <property type="evidence" value="ECO:0007669"/>
    <property type="project" value="InterPro"/>
</dbReference>
<dbReference type="GO" id="GO:0006122">
    <property type="term" value="P:mitochondrial electron transport, ubiquinol to cytochrome c"/>
    <property type="evidence" value="ECO:0007669"/>
    <property type="project" value="TreeGrafter"/>
</dbReference>
<dbReference type="CDD" id="cd00290">
    <property type="entry name" value="cytochrome_b_C"/>
    <property type="match status" value="1"/>
</dbReference>
<dbReference type="CDD" id="cd00284">
    <property type="entry name" value="Cytochrome_b_N"/>
    <property type="match status" value="1"/>
</dbReference>
<dbReference type="FunFam" id="1.20.810.10:FF:000002">
    <property type="entry name" value="Cytochrome b"/>
    <property type="match status" value="1"/>
</dbReference>
<dbReference type="Gene3D" id="1.20.810.10">
    <property type="entry name" value="Cytochrome Bc1 Complex, Chain C"/>
    <property type="match status" value="1"/>
</dbReference>
<dbReference type="InterPro" id="IPR005798">
    <property type="entry name" value="Cyt_b/b6_C"/>
</dbReference>
<dbReference type="InterPro" id="IPR036150">
    <property type="entry name" value="Cyt_b/b6_C_sf"/>
</dbReference>
<dbReference type="InterPro" id="IPR005797">
    <property type="entry name" value="Cyt_b/b6_N"/>
</dbReference>
<dbReference type="InterPro" id="IPR027387">
    <property type="entry name" value="Cytb/b6-like_sf"/>
</dbReference>
<dbReference type="InterPro" id="IPR030689">
    <property type="entry name" value="Cytochrome_b"/>
</dbReference>
<dbReference type="InterPro" id="IPR048260">
    <property type="entry name" value="Cytochrome_b_C_euk/bac"/>
</dbReference>
<dbReference type="InterPro" id="IPR048259">
    <property type="entry name" value="Cytochrome_b_N_euk/bac"/>
</dbReference>
<dbReference type="InterPro" id="IPR016174">
    <property type="entry name" value="Di-haem_cyt_TM"/>
</dbReference>
<dbReference type="PANTHER" id="PTHR19271">
    <property type="entry name" value="CYTOCHROME B"/>
    <property type="match status" value="1"/>
</dbReference>
<dbReference type="PANTHER" id="PTHR19271:SF16">
    <property type="entry name" value="CYTOCHROME B"/>
    <property type="match status" value="1"/>
</dbReference>
<dbReference type="Pfam" id="PF00032">
    <property type="entry name" value="Cytochrom_B_C"/>
    <property type="match status" value="1"/>
</dbReference>
<dbReference type="Pfam" id="PF00033">
    <property type="entry name" value="Cytochrome_B"/>
    <property type="match status" value="1"/>
</dbReference>
<dbReference type="PIRSF" id="PIRSF038885">
    <property type="entry name" value="COB"/>
    <property type="match status" value="1"/>
</dbReference>
<dbReference type="SUPFAM" id="SSF81648">
    <property type="entry name" value="a domain/subunit of cytochrome bc1 complex (Ubiquinol-cytochrome c reductase)"/>
    <property type="match status" value="1"/>
</dbReference>
<dbReference type="SUPFAM" id="SSF81342">
    <property type="entry name" value="Transmembrane di-heme cytochromes"/>
    <property type="match status" value="1"/>
</dbReference>
<dbReference type="PROSITE" id="PS51003">
    <property type="entry name" value="CYTB_CTER"/>
    <property type="match status" value="1"/>
</dbReference>
<dbReference type="PROSITE" id="PS51002">
    <property type="entry name" value="CYTB_NTER"/>
    <property type="match status" value="1"/>
</dbReference>
<evidence type="ECO:0000250" key="1"/>
<evidence type="ECO:0000250" key="2">
    <source>
        <dbReference type="UniProtKB" id="P00157"/>
    </source>
</evidence>
<evidence type="ECO:0000255" key="3">
    <source>
        <dbReference type="PROSITE-ProRule" id="PRU00967"/>
    </source>
</evidence>
<evidence type="ECO:0000255" key="4">
    <source>
        <dbReference type="PROSITE-ProRule" id="PRU00968"/>
    </source>
</evidence>
<feature type="chain" id="PRO_0000254691" description="Cytochrome b">
    <location>
        <begin position="1"/>
        <end position="379"/>
    </location>
</feature>
<feature type="transmembrane region" description="Helical" evidence="2">
    <location>
        <begin position="33"/>
        <end position="53"/>
    </location>
</feature>
<feature type="transmembrane region" description="Helical" evidence="2">
    <location>
        <begin position="77"/>
        <end position="98"/>
    </location>
</feature>
<feature type="transmembrane region" description="Helical" evidence="2">
    <location>
        <begin position="113"/>
        <end position="133"/>
    </location>
</feature>
<feature type="transmembrane region" description="Helical" evidence="2">
    <location>
        <begin position="178"/>
        <end position="198"/>
    </location>
</feature>
<feature type="transmembrane region" description="Helical" evidence="2">
    <location>
        <begin position="226"/>
        <end position="246"/>
    </location>
</feature>
<feature type="transmembrane region" description="Helical" evidence="2">
    <location>
        <begin position="288"/>
        <end position="308"/>
    </location>
</feature>
<feature type="transmembrane region" description="Helical" evidence="2">
    <location>
        <begin position="320"/>
        <end position="340"/>
    </location>
</feature>
<feature type="transmembrane region" description="Helical" evidence="2">
    <location>
        <begin position="347"/>
        <end position="367"/>
    </location>
</feature>
<feature type="binding site" description="axial binding residue" evidence="2">
    <location>
        <position position="83"/>
    </location>
    <ligand>
        <name>heme b</name>
        <dbReference type="ChEBI" id="CHEBI:60344"/>
        <label>b562</label>
    </ligand>
    <ligandPart>
        <name>Fe</name>
        <dbReference type="ChEBI" id="CHEBI:18248"/>
    </ligandPart>
</feature>
<feature type="binding site" description="axial binding residue" evidence="2">
    <location>
        <position position="97"/>
    </location>
    <ligand>
        <name>heme b</name>
        <dbReference type="ChEBI" id="CHEBI:60344"/>
        <label>b566</label>
    </ligand>
    <ligandPart>
        <name>Fe</name>
        <dbReference type="ChEBI" id="CHEBI:18248"/>
    </ligandPart>
</feature>
<feature type="binding site" description="axial binding residue" evidence="2">
    <location>
        <position position="182"/>
    </location>
    <ligand>
        <name>heme b</name>
        <dbReference type="ChEBI" id="CHEBI:60344"/>
        <label>b562</label>
    </ligand>
    <ligandPart>
        <name>Fe</name>
        <dbReference type="ChEBI" id="CHEBI:18248"/>
    </ligandPart>
</feature>
<feature type="binding site" description="axial binding residue" evidence="2">
    <location>
        <position position="196"/>
    </location>
    <ligand>
        <name>heme b</name>
        <dbReference type="ChEBI" id="CHEBI:60344"/>
        <label>b566</label>
    </ligand>
    <ligandPart>
        <name>Fe</name>
        <dbReference type="ChEBI" id="CHEBI:18248"/>
    </ligandPart>
</feature>
<feature type="binding site" evidence="2">
    <location>
        <position position="201"/>
    </location>
    <ligand>
        <name>a ubiquinone</name>
        <dbReference type="ChEBI" id="CHEBI:16389"/>
    </ligand>
</feature>
<gene>
    <name type="primary">MT-CYB</name>
    <name type="synonym">COB</name>
    <name type="synonym">CYTB</name>
    <name type="synonym">MTCYB</name>
</gene>
<protein>
    <recommendedName>
        <fullName>Cytochrome b</fullName>
    </recommendedName>
    <alternativeName>
        <fullName>Complex III subunit 3</fullName>
    </alternativeName>
    <alternativeName>
        <fullName>Complex III subunit III</fullName>
    </alternativeName>
    <alternativeName>
        <fullName>Cytochrome b-c1 complex subunit 3</fullName>
    </alternativeName>
    <alternativeName>
        <fullName>Ubiquinol-cytochrome-c reductase complex cytochrome b subunit</fullName>
    </alternativeName>
</protein>
<accession>Q4VUY9</accession>
<name>CYB_EROBO</name>
<sequence length="379" mass="42595">MTNIRKTHPLLKIVNSSFVDLPAPSSLSSWWNFGSLLGVCLAVQILTGLFLAMHYTSDTATAFNSVAHICRDVNYGWVLRYLHANGASMFFICLYLHVGRGLYYGSYLFTETWNIGIILLFAVMATAFMGYVLPWGQMSFWGATVITNLLSAIPYIGTDLVQWIWGGFSVDKATLTRFFAFHFLLPFIVTALVMVHLLFLHETGSNNPTGIPSDPDMIPFHPYYTIKDILGFLIMLTALSTLVLFSPDLLGDPDNYMPANPLSTPPHIKPEWYFLFAYAILRSIPNKLGGVLALVLSILILAVVPLLHTSKQRSMMFRPLSQCLFWLLVAVLLTLTWIGGQPVEHPYVIIGQVASVLYFLILLIFMPLISILENYLLKW</sequence>